<evidence type="ECO:0000255" key="1">
    <source>
        <dbReference type="HAMAP-Rule" id="MF_02002"/>
    </source>
</evidence>
<sequence>MTDYKATLNLPDTQFPMKAGLPQREPQTLQRWNEIGLYSKLRKIGEGRPKFVLHDGPPYANGSIHIGHAVNKILKDIITRSKTLAGFDAPYVPGWDCHGLPIEHKVETTFGKNQPADLTRERCRTYASEQIEGQKADFIRLGVLGDWDNPYKTMDFANEAGEIRALAEMVKQGFVFKGLKPVNWCFDCGSALAEAEVEYQDKKSDAIDVAFPIEDADKLAAAFGLSELSKPTAIVIWTTTPWTIPANQALNVHPEFTYALVDTGERILLLAEELVESCLQRYGLQGQVIATAPGAALELIRFRHPFYERFSPVYLAEYVELGAGTGIVHSSPAYGEDDFRTCKAYGMSNDDILSPVQSNGVYTPDLPFFGGQFIWKANPAIVEKLAEVGALLKHQPIQHSYMHCWRHKTPLIYRATAQWFVGMDTQPKQGGTLRERALAAIEQTQFVPAWGQARLHSMIAGRPDWCISRQRNWGVPIPFFLHKATGELHPRTVELMEEVAKRVEQEGIEAWFKLDAAELLGAEAADYDKINDTLDVWFDSGTTHWHVLRGSHGLGHTTGPRADLYLEGSDQHRGWFHSSLLTGSAIDGHAPYKALLTHGFVVDENGRKMSKSLGNVVAPQEVNDSLGADIMRLWVASTDYSGEMAVSKVILQRSADAYRRIRNTARFMLANLNGFDPAKDLLQPEQMLDLDRWAVDAALRLQEEIIEAYADYRFWNVYSKVHNFCVQELGGFYLDIIKDRQYTTAADSVARRSCQSALLHISEALVRWIAPILAFTAEEIWQFLPGERNESVMLNTWYAGLERLPEGFELDRAYWDRVMEVKAAVNKELENLRTAKAIGASLQAEVTLFCDDAKQADLAKLGDELRFALITSAAQTAPLADAPADAVVTEVEGLKLKILKSAHAKCGRCWHFRADVGSHAAHPELCGRCVSNIEGEGEVRKHA</sequence>
<dbReference type="EC" id="6.1.1.5" evidence="1"/>
<dbReference type="EMBL" id="CP000680">
    <property type="protein sequence ID" value="ABP83721.1"/>
    <property type="molecule type" value="Genomic_DNA"/>
</dbReference>
<dbReference type="SMR" id="A4XQV5"/>
<dbReference type="STRING" id="399739.Pmen_0953"/>
<dbReference type="KEGG" id="pmy:Pmen_0953"/>
<dbReference type="PATRIC" id="fig|399739.8.peg.962"/>
<dbReference type="eggNOG" id="COG0060">
    <property type="taxonomic scope" value="Bacteria"/>
</dbReference>
<dbReference type="HOGENOM" id="CLU_001493_7_1_6"/>
<dbReference type="OrthoDB" id="9810365at2"/>
<dbReference type="GO" id="GO:0005829">
    <property type="term" value="C:cytosol"/>
    <property type="evidence" value="ECO:0007669"/>
    <property type="project" value="TreeGrafter"/>
</dbReference>
<dbReference type="GO" id="GO:0002161">
    <property type="term" value="F:aminoacyl-tRNA deacylase activity"/>
    <property type="evidence" value="ECO:0007669"/>
    <property type="project" value="InterPro"/>
</dbReference>
<dbReference type="GO" id="GO:0005524">
    <property type="term" value="F:ATP binding"/>
    <property type="evidence" value="ECO:0007669"/>
    <property type="project" value="UniProtKB-UniRule"/>
</dbReference>
<dbReference type="GO" id="GO:0004822">
    <property type="term" value="F:isoleucine-tRNA ligase activity"/>
    <property type="evidence" value="ECO:0007669"/>
    <property type="project" value="UniProtKB-UniRule"/>
</dbReference>
<dbReference type="GO" id="GO:0000049">
    <property type="term" value="F:tRNA binding"/>
    <property type="evidence" value="ECO:0007669"/>
    <property type="project" value="InterPro"/>
</dbReference>
<dbReference type="GO" id="GO:0008270">
    <property type="term" value="F:zinc ion binding"/>
    <property type="evidence" value="ECO:0007669"/>
    <property type="project" value="UniProtKB-UniRule"/>
</dbReference>
<dbReference type="GO" id="GO:0006428">
    <property type="term" value="P:isoleucyl-tRNA aminoacylation"/>
    <property type="evidence" value="ECO:0007669"/>
    <property type="project" value="UniProtKB-UniRule"/>
</dbReference>
<dbReference type="CDD" id="cd07960">
    <property type="entry name" value="Anticodon_Ia_Ile_BEm"/>
    <property type="match status" value="1"/>
</dbReference>
<dbReference type="CDD" id="cd00818">
    <property type="entry name" value="IleRS_core"/>
    <property type="match status" value="1"/>
</dbReference>
<dbReference type="FunFam" id="1.10.730.20:FF:000001">
    <property type="entry name" value="Isoleucine--tRNA ligase"/>
    <property type="match status" value="1"/>
</dbReference>
<dbReference type="FunFam" id="3.40.50.620:FF:000042">
    <property type="entry name" value="Isoleucine--tRNA ligase"/>
    <property type="match status" value="1"/>
</dbReference>
<dbReference type="FunFam" id="3.40.50.620:FF:000048">
    <property type="entry name" value="Isoleucine--tRNA ligase"/>
    <property type="match status" value="1"/>
</dbReference>
<dbReference type="Gene3D" id="1.10.730.20">
    <property type="match status" value="1"/>
</dbReference>
<dbReference type="Gene3D" id="3.40.50.620">
    <property type="entry name" value="HUPs"/>
    <property type="match status" value="2"/>
</dbReference>
<dbReference type="Gene3D" id="1.10.10.830">
    <property type="entry name" value="Ile-tRNA synthetase CP2 domain-like"/>
    <property type="match status" value="1"/>
</dbReference>
<dbReference type="Gene3D" id="3.90.740.10">
    <property type="entry name" value="Valyl/Leucyl/Isoleucyl-tRNA synthetase, editing domain"/>
    <property type="match status" value="1"/>
</dbReference>
<dbReference type="HAMAP" id="MF_02002">
    <property type="entry name" value="Ile_tRNA_synth_type1"/>
    <property type="match status" value="1"/>
</dbReference>
<dbReference type="InterPro" id="IPR001412">
    <property type="entry name" value="aa-tRNA-synth_I_CS"/>
</dbReference>
<dbReference type="InterPro" id="IPR002300">
    <property type="entry name" value="aa-tRNA-synth_Ia"/>
</dbReference>
<dbReference type="InterPro" id="IPR033708">
    <property type="entry name" value="Anticodon_Ile_BEm"/>
</dbReference>
<dbReference type="InterPro" id="IPR002301">
    <property type="entry name" value="Ile-tRNA-ligase"/>
</dbReference>
<dbReference type="InterPro" id="IPR023585">
    <property type="entry name" value="Ile-tRNA-ligase_type1"/>
</dbReference>
<dbReference type="InterPro" id="IPR050081">
    <property type="entry name" value="Ile-tRNA_ligase"/>
</dbReference>
<dbReference type="InterPro" id="IPR013155">
    <property type="entry name" value="M/V/L/I-tRNA-synth_anticd-bd"/>
</dbReference>
<dbReference type="InterPro" id="IPR014729">
    <property type="entry name" value="Rossmann-like_a/b/a_fold"/>
</dbReference>
<dbReference type="InterPro" id="IPR009080">
    <property type="entry name" value="tRNAsynth_Ia_anticodon-bd"/>
</dbReference>
<dbReference type="InterPro" id="IPR009008">
    <property type="entry name" value="Val/Leu/Ile-tRNA-synth_edit"/>
</dbReference>
<dbReference type="InterPro" id="IPR010663">
    <property type="entry name" value="Znf_FPG/IleRS"/>
</dbReference>
<dbReference type="NCBIfam" id="TIGR00392">
    <property type="entry name" value="ileS"/>
    <property type="match status" value="1"/>
</dbReference>
<dbReference type="PANTHER" id="PTHR42765:SF1">
    <property type="entry name" value="ISOLEUCINE--TRNA LIGASE, MITOCHONDRIAL"/>
    <property type="match status" value="1"/>
</dbReference>
<dbReference type="PANTHER" id="PTHR42765">
    <property type="entry name" value="SOLEUCYL-TRNA SYNTHETASE"/>
    <property type="match status" value="1"/>
</dbReference>
<dbReference type="Pfam" id="PF08264">
    <property type="entry name" value="Anticodon_1"/>
    <property type="match status" value="1"/>
</dbReference>
<dbReference type="Pfam" id="PF00133">
    <property type="entry name" value="tRNA-synt_1"/>
    <property type="match status" value="1"/>
</dbReference>
<dbReference type="Pfam" id="PF06827">
    <property type="entry name" value="zf-FPG_IleRS"/>
    <property type="match status" value="1"/>
</dbReference>
<dbReference type="PRINTS" id="PR00984">
    <property type="entry name" value="TRNASYNTHILE"/>
</dbReference>
<dbReference type="SUPFAM" id="SSF47323">
    <property type="entry name" value="Anticodon-binding domain of a subclass of class I aminoacyl-tRNA synthetases"/>
    <property type="match status" value="1"/>
</dbReference>
<dbReference type="SUPFAM" id="SSF52374">
    <property type="entry name" value="Nucleotidylyl transferase"/>
    <property type="match status" value="1"/>
</dbReference>
<dbReference type="SUPFAM" id="SSF50677">
    <property type="entry name" value="ValRS/IleRS/LeuRS editing domain"/>
    <property type="match status" value="1"/>
</dbReference>
<dbReference type="PROSITE" id="PS00178">
    <property type="entry name" value="AA_TRNA_LIGASE_I"/>
    <property type="match status" value="1"/>
</dbReference>
<name>SYI_ECTM1</name>
<organism>
    <name type="scientific">Ectopseudomonas mendocina (strain ymp)</name>
    <name type="common">Pseudomonas mendocina</name>
    <dbReference type="NCBI Taxonomy" id="399739"/>
    <lineage>
        <taxon>Bacteria</taxon>
        <taxon>Pseudomonadati</taxon>
        <taxon>Pseudomonadota</taxon>
        <taxon>Gammaproteobacteria</taxon>
        <taxon>Pseudomonadales</taxon>
        <taxon>Pseudomonadaceae</taxon>
        <taxon>Ectopseudomonas</taxon>
    </lineage>
</organism>
<comment type="function">
    <text evidence="1">Catalyzes the attachment of isoleucine to tRNA(Ile). As IleRS can inadvertently accommodate and process structurally similar amino acids such as valine, to avoid such errors it has two additional distinct tRNA(Ile)-dependent editing activities. One activity is designated as 'pretransfer' editing and involves the hydrolysis of activated Val-AMP. The other activity is designated 'posttransfer' editing and involves deacylation of mischarged Val-tRNA(Ile).</text>
</comment>
<comment type="catalytic activity">
    <reaction evidence="1">
        <text>tRNA(Ile) + L-isoleucine + ATP = L-isoleucyl-tRNA(Ile) + AMP + diphosphate</text>
        <dbReference type="Rhea" id="RHEA:11060"/>
        <dbReference type="Rhea" id="RHEA-COMP:9666"/>
        <dbReference type="Rhea" id="RHEA-COMP:9695"/>
        <dbReference type="ChEBI" id="CHEBI:30616"/>
        <dbReference type="ChEBI" id="CHEBI:33019"/>
        <dbReference type="ChEBI" id="CHEBI:58045"/>
        <dbReference type="ChEBI" id="CHEBI:78442"/>
        <dbReference type="ChEBI" id="CHEBI:78528"/>
        <dbReference type="ChEBI" id="CHEBI:456215"/>
        <dbReference type="EC" id="6.1.1.5"/>
    </reaction>
</comment>
<comment type="cofactor">
    <cofactor evidence="1">
        <name>Zn(2+)</name>
        <dbReference type="ChEBI" id="CHEBI:29105"/>
    </cofactor>
    <text evidence="1">Binds 1 zinc ion per subunit.</text>
</comment>
<comment type="subunit">
    <text evidence="1">Monomer.</text>
</comment>
<comment type="subcellular location">
    <subcellularLocation>
        <location evidence="1">Cytoplasm</location>
    </subcellularLocation>
</comment>
<comment type="domain">
    <text evidence="1">IleRS has two distinct active sites: one for aminoacylation and one for editing. The misactivated valine is translocated from the active site to the editing site, which sterically excludes the correctly activated isoleucine. The single editing site contains two valyl binding pockets, one specific for each substrate (Val-AMP or Val-tRNA(Ile)).</text>
</comment>
<comment type="similarity">
    <text evidence="1">Belongs to the class-I aminoacyl-tRNA synthetase family. IleS type 1 subfamily.</text>
</comment>
<gene>
    <name evidence="1" type="primary">ileS</name>
    <name type="ordered locus">Pmen_0953</name>
</gene>
<feature type="chain" id="PRO_1000022106" description="Isoleucine--tRNA ligase">
    <location>
        <begin position="1"/>
        <end position="943"/>
    </location>
</feature>
<feature type="short sequence motif" description="'HIGH' region">
    <location>
        <begin position="58"/>
        <end position="68"/>
    </location>
</feature>
<feature type="short sequence motif" description="'KMSKS' region">
    <location>
        <begin position="608"/>
        <end position="612"/>
    </location>
</feature>
<feature type="binding site" evidence="1">
    <location>
        <position position="567"/>
    </location>
    <ligand>
        <name>L-isoleucyl-5'-AMP</name>
        <dbReference type="ChEBI" id="CHEBI:178002"/>
    </ligand>
</feature>
<feature type="binding site" evidence="1">
    <location>
        <position position="611"/>
    </location>
    <ligand>
        <name>ATP</name>
        <dbReference type="ChEBI" id="CHEBI:30616"/>
    </ligand>
</feature>
<feature type="binding site" evidence="1">
    <location>
        <position position="906"/>
    </location>
    <ligand>
        <name>Zn(2+)</name>
        <dbReference type="ChEBI" id="CHEBI:29105"/>
    </ligand>
</feature>
<feature type="binding site" evidence="1">
    <location>
        <position position="909"/>
    </location>
    <ligand>
        <name>Zn(2+)</name>
        <dbReference type="ChEBI" id="CHEBI:29105"/>
    </ligand>
</feature>
<feature type="binding site" evidence="1">
    <location>
        <position position="926"/>
    </location>
    <ligand>
        <name>Zn(2+)</name>
        <dbReference type="ChEBI" id="CHEBI:29105"/>
    </ligand>
</feature>
<feature type="binding site" evidence="1">
    <location>
        <position position="929"/>
    </location>
    <ligand>
        <name>Zn(2+)</name>
        <dbReference type="ChEBI" id="CHEBI:29105"/>
    </ligand>
</feature>
<protein>
    <recommendedName>
        <fullName evidence="1">Isoleucine--tRNA ligase</fullName>
        <ecNumber evidence="1">6.1.1.5</ecNumber>
    </recommendedName>
    <alternativeName>
        <fullName evidence="1">Isoleucyl-tRNA synthetase</fullName>
        <shortName evidence="1">IleRS</shortName>
    </alternativeName>
</protein>
<proteinExistence type="inferred from homology"/>
<accession>A4XQV5</accession>
<reference key="1">
    <citation type="submission" date="2007-04" db="EMBL/GenBank/DDBJ databases">
        <title>Complete sequence of Pseudomonas mendocina ymp.</title>
        <authorList>
            <consortium name="US DOE Joint Genome Institute"/>
            <person name="Copeland A."/>
            <person name="Lucas S."/>
            <person name="Lapidus A."/>
            <person name="Barry K."/>
            <person name="Glavina del Rio T."/>
            <person name="Dalin E."/>
            <person name="Tice H."/>
            <person name="Pitluck S."/>
            <person name="Kiss H."/>
            <person name="Brettin T."/>
            <person name="Detter J.C."/>
            <person name="Bruce D."/>
            <person name="Han C."/>
            <person name="Schmutz J."/>
            <person name="Larimer F."/>
            <person name="Land M."/>
            <person name="Hauser L."/>
            <person name="Kyrpides N."/>
            <person name="Mikhailova N."/>
            <person name="Hersman L."/>
            <person name="Dubois J."/>
            <person name="Maurice P."/>
            <person name="Richardson P."/>
        </authorList>
    </citation>
    <scope>NUCLEOTIDE SEQUENCE [LARGE SCALE GENOMIC DNA]</scope>
    <source>
        <strain>ymp</strain>
    </source>
</reference>
<keyword id="KW-0030">Aminoacyl-tRNA synthetase</keyword>
<keyword id="KW-0067">ATP-binding</keyword>
<keyword id="KW-0963">Cytoplasm</keyword>
<keyword id="KW-0436">Ligase</keyword>
<keyword id="KW-0479">Metal-binding</keyword>
<keyword id="KW-0547">Nucleotide-binding</keyword>
<keyword id="KW-0648">Protein biosynthesis</keyword>
<keyword id="KW-0862">Zinc</keyword>